<gene>
    <name type="primary">Or85f</name>
    <name type="ORF">CG16755</name>
</gene>
<dbReference type="EMBL" id="AE014297">
    <property type="protein sequence ID" value="AAF54368.1"/>
    <property type="molecule type" value="Genomic_DNA"/>
</dbReference>
<dbReference type="RefSeq" id="NP_524289.1">
    <property type="nucleotide sequence ID" value="NM_079565.3"/>
</dbReference>
<dbReference type="SMR" id="Q9VHE6"/>
<dbReference type="DIP" id="DIP-22461N"/>
<dbReference type="FunCoup" id="Q9VHE6">
    <property type="interactions" value="18"/>
</dbReference>
<dbReference type="STRING" id="7227.FBpp0081506"/>
<dbReference type="GlyCosmos" id="Q9VHE6">
    <property type="glycosylation" value="1 site, No reported glycans"/>
</dbReference>
<dbReference type="GlyGen" id="Q9VHE6">
    <property type="glycosylation" value="1 site"/>
</dbReference>
<dbReference type="PaxDb" id="7227-FBpp0081506"/>
<dbReference type="EnsemblMetazoa" id="FBtr0082028">
    <property type="protein sequence ID" value="FBpp0081506"/>
    <property type="gene ID" value="FBgn0037685"/>
</dbReference>
<dbReference type="GeneID" id="41119"/>
<dbReference type="KEGG" id="dme:Dmel_CG16755"/>
<dbReference type="AGR" id="FB:FBgn0037685"/>
<dbReference type="CTD" id="41119"/>
<dbReference type="FlyBase" id="FBgn0037685">
    <property type="gene designation" value="Or85f"/>
</dbReference>
<dbReference type="VEuPathDB" id="VectorBase:FBgn0037685"/>
<dbReference type="eggNOG" id="ENOG502TBU8">
    <property type="taxonomic scope" value="Eukaryota"/>
</dbReference>
<dbReference type="GeneTree" id="ENSGT00560000077544"/>
<dbReference type="HOGENOM" id="CLU_033399_0_0_1"/>
<dbReference type="InParanoid" id="Q9VHE6"/>
<dbReference type="OMA" id="VYLVCYY"/>
<dbReference type="OrthoDB" id="8185860at2759"/>
<dbReference type="PhylomeDB" id="Q9VHE6"/>
<dbReference type="BioGRID-ORCS" id="41119">
    <property type="hits" value="0 hits in 1 CRISPR screen"/>
</dbReference>
<dbReference type="GenomeRNAi" id="41119"/>
<dbReference type="PRO" id="PR:Q9VHE6"/>
<dbReference type="Proteomes" id="UP000000803">
    <property type="component" value="Chromosome 3R"/>
</dbReference>
<dbReference type="Bgee" id="FBgn0037685">
    <property type="expression patterns" value="Expressed in antennal basiconic sensillum ab10 (Drosophila) and 4 other cell types or tissues"/>
</dbReference>
<dbReference type="ExpressionAtlas" id="Q9VHE6">
    <property type="expression patterns" value="baseline and differential"/>
</dbReference>
<dbReference type="GO" id="GO:0032590">
    <property type="term" value="C:dendrite membrane"/>
    <property type="evidence" value="ECO:0000250"/>
    <property type="project" value="FlyBase"/>
</dbReference>
<dbReference type="GO" id="GO:0005886">
    <property type="term" value="C:plasma membrane"/>
    <property type="evidence" value="ECO:0007005"/>
    <property type="project" value="FlyBase"/>
</dbReference>
<dbReference type="GO" id="GO:0170020">
    <property type="term" value="F:ionotropic olfactory receptor activity"/>
    <property type="evidence" value="ECO:0007005"/>
    <property type="project" value="FlyBase"/>
</dbReference>
<dbReference type="GO" id="GO:0005549">
    <property type="term" value="F:odorant binding"/>
    <property type="evidence" value="ECO:0000250"/>
    <property type="project" value="FlyBase"/>
</dbReference>
<dbReference type="GO" id="GO:0004984">
    <property type="term" value="F:olfactory receptor activity"/>
    <property type="evidence" value="ECO:0000318"/>
    <property type="project" value="GO_Central"/>
</dbReference>
<dbReference type="GO" id="GO:0050911">
    <property type="term" value="P:detection of chemical stimulus involved in sensory perception of smell"/>
    <property type="evidence" value="ECO:0007005"/>
    <property type="project" value="FlyBase"/>
</dbReference>
<dbReference type="GO" id="GO:0007165">
    <property type="term" value="P:signal transduction"/>
    <property type="evidence" value="ECO:0007669"/>
    <property type="project" value="UniProtKB-KW"/>
</dbReference>
<dbReference type="InterPro" id="IPR004117">
    <property type="entry name" value="7tm6_olfct_rcpt"/>
</dbReference>
<dbReference type="PANTHER" id="PTHR21137">
    <property type="entry name" value="ODORANT RECEPTOR"/>
    <property type="match status" value="1"/>
</dbReference>
<dbReference type="PANTHER" id="PTHR21137:SF44">
    <property type="entry name" value="ODORANT RECEPTOR 13A-RELATED"/>
    <property type="match status" value="1"/>
</dbReference>
<dbReference type="Pfam" id="PF02949">
    <property type="entry name" value="7tm_6"/>
    <property type="match status" value="1"/>
</dbReference>
<proteinExistence type="evidence at transcript level"/>
<sequence length="392" mass="45343">MEPVQYSYEDFARLPTTVFWIMGYDMLGVPKTRSRRILYWIYRFLCLASHGVCVGVMVFRMVEAKTIDNVSLIMRYATLVTYIINSDTKFATVLQRSAIQSLNSKLAELYPKTTLDRIYHRVNDHYWTKSFVYLVIIYIGSSIMVVIGPIITSIIAYFTHNVFTYMHCYPYFLYDPEKDPVWIYISIYALEWLHSTQMVISNIGADIWLLYFQVQINLHFRGIIRSLADHKPSVKHDQEDRKFIAKIVDKQVHLVSLQNDLNGIFGKSLLLSLLTTAAVICTVAVYTLIQGPTLEGFTYVIFIGTSVMQVYLVCYYGQQVLDLSGEVAHAVYNHDFHDASIAYKRYLLIIIIRAQQPVELNAMGYLSISLDTFKQLMSVSYRVITMLMQMIQ</sequence>
<organism>
    <name type="scientific">Drosophila melanogaster</name>
    <name type="common">Fruit fly</name>
    <dbReference type="NCBI Taxonomy" id="7227"/>
    <lineage>
        <taxon>Eukaryota</taxon>
        <taxon>Metazoa</taxon>
        <taxon>Ecdysozoa</taxon>
        <taxon>Arthropoda</taxon>
        <taxon>Hexapoda</taxon>
        <taxon>Insecta</taxon>
        <taxon>Pterygota</taxon>
        <taxon>Neoptera</taxon>
        <taxon>Endopterygota</taxon>
        <taxon>Diptera</taxon>
        <taxon>Brachycera</taxon>
        <taxon>Muscomorpha</taxon>
        <taxon>Ephydroidea</taxon>
        <taxon>Drosophilidae</taxon>
        <taxon>Drosophila</taxon>
        <taxon>Sophophora</taxon>
    </lineage>
</organism>
<protein>
    <recommendedName>
        <fullName>Odorant receptor 85f</fullName>
    </recommendedName>
</protein>
<evidence type="ECO:0000250" key="1"/>
<evidence type="ECO:0000255" key="2"/>
<evidence type="ECO:0000269" key="3">
    <source>
    </source>
</evidence>
<evidence type="ECO:0000269" key="4">
    <source>
    </source>
</evidence>
<evidence type="ECO:0000305" key="5"/>
<accession>Q9VHE6</accession>
<keyword id="KW-1003">Cell membrane</keyword>
<keyword id="KW-0325">Glycoprotein</keyword>
<keyword id="KW-0472">Membrane</keyword>
<keyword id="KW-0552">Olfaction</keyword>
<keyword id="KW-0675">Receptor</keyword>
<keyword id="KW-1185">Reference proteome</keyword>
<keyword id="KW-0716">Sensory transduction</keyword>
<keyword id="KW-0807">Transducer</keyword>
<keyword id="KW-0812">Transmembrane</keyword>
<keyword id="KW-1133">Transmembrane helix</keyword>
<feature type="chain" id="PRO_0000174279" description="Odorant receptor 85f">
    <location>
        <begin position="1"/>
        <end position="392"/>
    </location>
</feature>
<feature type="topological domain" description="Cytoplasmic" evidence="2">
    <location>
        <begin position="1"/>
        <end position="36"/>
    </location>
</feature>
<feature type="transmembrane region" description="Helical; Name=1" evidence="2">
    <location>
        <begin position="37"/>
        <end position="57"/>
    </location>
</feature>
<feature type="topological domain" description="Extracellular" evidence="2">
    <location>
        <begin position="58"/>
        <end position="69"/>
    </location>
</feature>
<feature type="transmembrane region" description="Helical; Name=2" evidence="2">
    <location>
        <begin position="70"/>
        <end position="90"/>
    </location>
</feature>
<feature type="topological domain" description="Cytoplasmic" evidence="2">
    <location>
        <begin position="91"/>
        <end position="130"/>
    </location>
</feature>
<feature type="transmembrane region" description="Helical; Name=3" evidence="2">
    <location>
        <begin position="131"/>
        <end position="151"/>
    </location>
</feature>
<feature type="topological domain" description="Extracellular" evidence="2">
    <location>
        <begin position="152"/>
        <end position="179"/>
    </location>
</feature>
<feature type="transmembrane region" description="Helical; Name=4" evidence="2">
    <location>
        <begin position="180"/>
        <end position="200"/>
    </location>
</feature>
<feature type="topological domain" description="Cytoplasmic" evidence="2">
    <location>
        <begin position="201"/>
        <end position="268"/>
    </location>
</feature>
<feature type="transmembrane region" description="Helical; Name=5" evidence="2">
    <location>
        <begin position="269"/>
        <end position="289"/>
    </location>
</feature>
<feature type="topological domain" description="Extracellular" evidence="2">
    <location>
        <begin position="290"/>
        <end position="295"/>
    </location>
</feature>
<feature type="transmembrane region" description="Helical; Name=6" evidence="2">
    <location>
        <begin position="296"/>
        <end position="316"/>
    </location>
</feature>
<feature type="topological domain" description="Cytoplasmic" evidence="2">
    <location>
        <begin position="317"/>
        <end position="363"/>
    </location>
</feature>
<feature type="transmembrane region" description="Helical; Name=7" evidence="2">
    <location>
        <begin position="364"/>
        <end position="384"/>
    </location>
</feature>
<feature type="topological domain" description="Extracellular" evidence="2">
    <location>
        <begin position="385"/>
        <end position="392"/>
    </location>
</feature>
<feature type="glycosylation site" description="N-linked (GlcNAc...) asparagine" evidence="2">
    <location>
        <position position="69"/>
    </location>
</feature>
<reference key="1">
    <citation type="journal article" date="2000" name="Science">
        <title>The genome sequence of Drosophila melanogaster.</title>
        <authorList>
            <person name="Adams M.D."/>
            <person name="Celniker S.E."/>
            <person name="Holt R.A."/>
            <person name="Evans C.A."/>
            <person name="Gocayne J.D."/>
            <person name="Amanatides P.G."/>
            <person name="Scherer S.E."/>
            <person name="Li P.W."/>
            <person name="Hoskins R.A."/>
            <person name="Galle R.F."/>
            <person name="George R.A."/>
            <person name="Lewis S.E."/>
            <person name="Richards S."/>
            <person name="Ashburner M."/>
            <person name="Henderson S.N."/>
            <person name="Sutton G.G."/>
            <person name="Wortman J.R."/>
            <person name="Yandell M.D."/>
            <person name="Zhang Q."/>
            <person name="Chen L.X."/>
            <person name="Brandon R.C."/>
            <person name="Rogers Y.-H.C."/>
            <person name="Blazej R.G."/>
            <person name="Champe M."/>
            <person name="Pfeiffer B.D."/>
            <person name="Wan K.H."/>
            <person name="Doyle C."/>
            <person name="Baxter E.G."/>
            <person name="Helt G."/>
            <person name="Nelson C.R."/>
            <person name="Miklos G.L.G."/>
            <person name="Abril J.F."/>
            <person name="Agbayani A."/>
            <person name="An H.-J."/>
            <person name="Andrews-Pfannkoch C."/>
            <person name="Baldwin D."/>
            <person name="Ballew R.M."/>
            <person name="Basu A."/>
            <person name="Baxendale J."/>
            <person name="Bayraktaroglu L."/>
            <person name="Beasley E.M."/>
            <person name="Beeson K.Y."/>
            <person name="Benos P.V."/>
            <person name="Berman B.P."/>
            <person name="Bhandari D."/>
            <person name="Bolshakov S."/>
            <person name="Borkova D."/>
            <person name="Botchan M.R."/>
            <person name="Bouck J."/>
            <person name="Brokstein P."/>
            <person name="Brottier P."/>
            <person name="Burtis K.C."/>
            <person name="Busam D.A."/>
            <person name="Butler H."/>
            <person name="Cadieu E."/>
            <person name="Center A."/>
            <person name="Chandra I."/>
            <person name="Cherry J.M."/>
            <person name="Cawley S."/>
            <person name="Dahlke C."/>
            <person name="Davenport L.B."/>
            <person name="Davies P."/>
            <person name="de Pablos B."/>
            <person name="Delcher A."/>
            <person name="Deng Z."/>
            <person name="Mays A.D."/>
            <person name="Dew I."/>
            <person name="Dietz S.M."/>
            <person name="Dodson K."/>
            <person name="Doup L.E."/>
            <person name="Downes M."/>
            <person name="Dugan-Rocha S."/>
            <person name="Dunkov B.C."/>
            <person name="Dunn P."/>
            <person name="Durbin K.J."/>
            <person name="Evangelista C.C."/>
            <person name="Ferraz C."/>
            <person name="Ferriera S."/>
            <person name="Fleischmann W."/>
            <person name="Fosler C."/>
            <person name="Gabrielian A.E."/>
            <person name="Garg N.S."/>
            <person name="Gelbart W.M."/>
            <person name="Glasser K."/>
            <person name="Glodek A."/>
            <person name="Gong F."/>
            <person name="Gorrell J.H."/>
            <person name="Gu Z."/>
            <person name="Guan P."/>
            <person name="Harris M."/>
            <person name="Harris N.L."/>
            <person name="Harvey D.A."/>
            <person name="Heiman T.J."/>
            <person name="Hernandez J.R."/>
            <person name="Houck J."/>
            <person name="Hostin D."/>
            <person name="Houston K.A."/>
            <person name="Howland T.J."/>
            <person name="Wei M.-H."/>
            <person name="Ibegwam C."/>
            <person name="Jalali M."/>
            <person name="Kalush F."/>
            <person name="Karpen G.H."/>
            <person name="Ke Z."/>
            <person name="Kennison J.A."/>
            <person name="Ketchum K.A."/>
            <person name="Kimmel B.E."/>
            <person name="Kodira C.D."/>
            <person name="Kraft C.L."/>
            <person name="Kravitz S."/>
            <person name="Kulp D."/>
            <person name="Lai Z."/>
            <person name="Lasko P."/>
            <person name="Lei Y."/>
            <person name="Levitsky A.A."/>
            <person name="Li J.H."/>
            <person name="Li Z."/>
            <person name="Liang Y."/>
            <person name="Lin X."/>
            <person name="Liu X."/>
            <person name="Mattei B."/>
            <person name="McIntosh T.C."/>
            <person name="McLeod M.P."/>
            <person name="McPherson D."/>
            <person name="Merkulov G."/>
            <person name="Milshina N.V."/>
            <person name="Mobarry C."/>
            <person name="Morris J."/>
            <person name="Moshrefi A."/>
            <person name="Mount S.M."/>
            <person name="Moy M."/>
            <person name="Murphy B."/>
            <person name="Murphy L."/>
            <person name="Muzny D.M."/>
            <person name="Nelson D.L."/>
            <person name="Nelson D.R."/>
            <person name="Nelson K.A."/>
            <person name="Nixon K."/>
            <person name="Nusskern D.R."/>
            <person name="Pacleb J.M."/>
            <person name="Palazzolo M."/>
            <person name="Pittman G.S."/>
            <person name="Pan S."/>
            <person name="Pollard J."/>
            <person name="Puri V."/>
            <person name="Reese M.G."/>
            <person name="Reinert K."/>
            <person name="Remington K."/>
            <person name="Saunders R.D.C."/>
            <person name="Scheeler F."/>
            <person name="Shen H."/>
            <person name="Shue B.C."/>
            <person name="Siden-Kiamos I."/>
            <person name="Simpson M."/>
            <person name="Skupski M.P."/>
            <person name="Smith T.J."/>
            <person name="Spier E."/>
            <person name="Spradling A.C."/>
            <person name="Stapleton M."/>
            <person name="Strong R."/>
            <person name="Sun E."/>
            <person name="Svirskas R."/>
            <person name="Tector C."/>
            <person name="Turner R."/>
            <person name="Venter E."/>
            <person name="Wang A.H."/>
            <person name="Wang X."/>
            <person name="Wang Z.-Y."/>
            <person name="Wassarman D.A."/>
            <person name="Weinstock G.M."/>
            <person name="Weissenbach J."/>
            <person name="Williams S.M."/>
            <person name="Woodage T."/>
            <person name="Worley K.C."/>
            <person name="Wu D."/>
            <person name="Yang S."/>
            <person name="Yao Q.A."/>
            <person name="Ye J."/>
            <person name="Yeh R.-F."/>
            <person name="Zaveri J.S."/>
            <person name="Zhan M."/>
            <person name="Zhang G."/>
            <person name="Zhao Q."/>
            <person name="Zheng L."/>
            <person name="Zheng X.H."/>
            <person name="Zhong F.N."/>
            <person name="Zhong W."/>
            <person name="Zhou X."/>
            <person name="Zhu S.C."/>
            <person name="Zhu X."/>
            <person name="Smith H.O."/>
            <person name="Gibbs R.A."/>
            <person name="Myers E.W."/>
            <person name="Rubin G.M."/>
            <person name="Venter J.C."/>
        </authorList>
    </citation>
    <scope>NUCLEOTIDE SEQUENCE [LARGE SCALE GENOMIC DNA]</scope>
    <source>
        <strain>Berkeley</strain>
    </source>
</reference>
<reference key="2">
    <citation type="journal article" date="2002" name="Genome Biol.">
        <title>Annotation of the Drosophila melanogaster euchromatic genome: a systematic review.</title>
        <authorList>
            <person name="Misra S."/>
            <person name="Crosby M.A."/>
            <person name="Mungall C.J."/>
            <person name="Matthews B.B."/>
            <person name="Campbell K.S."/>
            <person name="Hradecky P."/>
            <person name="Huang Y."/>
            <person name="Kaminker J.S."/>
            <person name="Millburn G.H."/>
            <person name="Prochnik S.E."/>
            <person name="Smith C.D."/>
            <person name="Tupy J.L."/>
            <person name="Whitfield E.J."/>
            <person name="Bayraktaroglu L."/>
            <person name="Berman B.P."/>
            <person name="Bettencourt B.R."/>
            <person name="Celniker S.E."/>
            <person name="de Grey A.D.N.J."/>
            <person name="Drysdale R.A."/>
            <person name="Harris N.L."/>
            <person name="Richter J."/>
            <person name="Russo S."/>
            <person name="Schroeder A.J."/>
            <person name="Shu S.Q."/>
            <person name="Stapleton M."/>
            <person name="Yamada C."/>
            <person name="Ashburner M."/>
            <person name="Gelbart W.M."/>
            <person name="Rubin G.M."/>
            <person name="Lewis S.E."/>
        </authorList>
    </citation>
    <scope>GENOME REANNOTATION</scope>
    <source>
        <strain>Berkeley</strain>
    </source>
</reference>
<reference key="3">
    <citation type="journal article" date="2000" name="Cell">
        <title>An olfactory sensory map in the fly brain.</title>
        <authorList>
            <person name="Vosshall L.B."/>
            <person name="Wong A.M."/>
            <person name="Axel R."/>
        </authorList>
    </citation>
    <scope>TISSUE SPECIFICITY</scope>
</reference>
<reference key="4">
    <citation type="journal article" date="2006" name="Cell">
        <title>Coding of odors by a receptor repertoire.</title>
        <authorList>
            <person name="Hallem E.A."/>
            <person name="Carlson J.R."/>
        </authorList>
    </citation>
    <scope>FUNCTION</scope>
</reference>
<name>OR85F_DROME</name>
<comment type="function">
    <text evidence="4">Odorant receptor which mediates acceptance or avoidance behavior, depending on its substrates. The odorant receptor repertoire encodes a large collection of odor stimuli that vary widely in identity, intensity, and duration. May form a complex with Orco to form odorant-sensing units, providing sensitive and prolonged odorant signaling and calcium permeability.</text>
</comment>
<comment type="subunit">
    <text evidence="1">Interacts with Orco. Complexes exist early in the endomembrane system in olfactory sensory neurons (OSNs), coupling these complexes to the conserved ciliary trafficking pathway (By similarity).</text>
</comment>
<comment type="subcellular location">
    <subcellularLocation>
        <location evidence="1">Cell membrane</location>
        <topology evidence="1">Multi-pass membrane protein</topology>
    </subcellularLocation>
</comment>
<comment type="tissue specificity">
    <text evidence="3">Expressed in olfactory sensory neurons in the antenna.</text>
</comment>
<comment type="miscellaneous">
    <text>The atypical heteromeric and topological design of the odorant receptors appears to be an insect-specific solution for odor recognition, making the OR/Orco complex an attractive target for the development of highly selective insect repellents to disrupt olfactory-mediated host-seeking behaviors of insect disease vectors. Odor-evoked OR currents are independent of known G-protein-coupled second messenger pathways.</text>
</comment>
<comment type="similarity">
    <text evidence="5">Belongs to the insect chemoreceptor superfamily. Heteromeric odorant receptor channel (TC 1.A.69) family. Or49a subfamily.</text>
</comment>